<accession>A1TH24</accession>
<name>MSRA_MYCVP</name>
<protein>
    <recommendedName>
        <fullName evidence="1">Peptide methionine sulfoxide reductase MsrA</fullName>
        <shortName evidence="1">Protein-methionine-S-oxide reductase</shortName>
        <ecNumber evidence="1">1.8.4.11</ecNumber>
    </recommendedName>
    <alternativeName>
        <fullName evidence="1">Peptide-methionine (S)-S-oxide reductase</fullName>
        <shortName evidence="1">Peptide Met(O) reductase</shortName>
    </alternativeName>
</protein>
<proteinExistence type="inferred from homology"/>
<keyword id="KW-0560">Oxidoreductase</keyword>
<organism>
    <name type="scientific">Mycolicibacterium vanbaalenii (strain DSM 7251 / JCM 13017 / BCRC 16820 / KCTC 9966 / NRRL B-24157 / PYR-1)</name>
    <name type="common">Mycobacterium vanbaalenii</name>
    <dbReference type="NCBI Taxonomy" id="350058"/>
    <lineage>
        <taxon>Bacteria</taxon>
        <taxon>Bacillati</taxon>
        <taxon>Actinomycetota</taxon>
        <taxon>Actinomycetes</taxon>
        <taxon>Mycobacteriales</taxon>
        <taxon>Mycobacteriaceae</taxon>
        <taxon>Mycolicibacterium</taxon>
    </lineage>
</organism>
<gene>
    <name evidence="1" type="primary">msrA</name>
    <name type="ordered locus">Mvan_5709</name>
</gene>
<reference key="1">
    <citation type="submission" date="2006-12" db="EMBL/GenBank/DDBJ databases">
        <title>Complete sequence of Mycobacterium vanbaalenii PYR-1.</title>
        <authorList>
            <consortium name="US DOE Joint Genome Institute"/>
            <person name="Copeland A."/>
            <person name="Lucas S."/>
            <person name="Lapidus A."/>
            <person name="Barry K."/>
            <person name="Detter J.C."/>
            <person name="Glavina del Rio T."/>
            <person name="Hammon N."/>
            <person name="Israni S."/>
            <person name="Dalin E."/>
            <person name="Tice H."/>
            <person name="Pitluck S."/>
            <person name="Singan V."/>
            <person name="Schmutz J."/>
            <person name="Larimer F."/>
            <person name="Land M."/>
            <person name="Hauser L."/>
            <person name="Kyrpides N."/>
            <person name="Anderson I.J."/>
            <person name="Miller C."/>
            <person name="Richardson P."/>
        </authorList>
    </citation>
    <scope>NUCLEOTIDE SEQUENCE [LARGE SCALE GENOMIC DNA]</scope>
    <source>
        <strain>DSM 7251 / JCM 13017 / BCRC 16820 / KCTC 9966 / NRRL B-24157 / PYR-1</strain>
    </source>
</reference>
<dbReference type="EC" id="1.8.4.11" evidence="1"/>
<dbReference type="EMBL" id="CP000511">
    <property type="protein sequence ID" value="ABM16474.1"/>
    <property type="molecule type" value="Genomic_DNA"/>
</dbReference>
<dbReference type="RefSeq" id="WP_011782826.1">
    <property type="nucleotide sequence ID" value="NC_008726.1"/>
</dbReference>
<dbReference type="SMR" id="A1TH24"/>
<dbReference type="STRING" id="350058.Mvan_5709"/>
<dbReference type="KEGG" id="mva:Mvan_5709"/>
<dbReference type="eggNOG" id="COG0225">
    <property type="taxonomic scope" value="Bacteria"/>
</dbReference>
<dbReference type="HOGENOM" id="CLU_031040_10_2_11"/>
<dbReference type="Proteomes" id="UP000009159">
    <property type="component" value="Chromosome"/>
</dbReference>
<dbReference type="GO" id="GO:0033744">
    <property type="term" value="F:L-methionine:thioredoxin-disulfide S-oxidoreductase activity"/>
    <property type="evidence" value="ECO:0007669"/>
    <property type="project" value="RHEA"/>
</dbReference>
<dbReference type="GO" id="GO:0008113">
    <property type="term" value="F:peptide-methionine (S)-S-oxide reductase activity"/>
    <property type="evidence" value="ECO:0007669"/>
    <property type="project" value="UniProtKB-UniRule"/>
</dbReference>
<dbReference type="GO" id="GO:0036211">
    <property type="term" value="P:protein modification process"/>
    <property type="evidence" value="ECO:0007669"/>
    <property type="project" value="UniProtKB-UniRule"/>
</dbReference>
<dbReference type="FunFam" id="3.30.1060.10:FF:000005">
    <property type="entry name" value="Peptide methionine sulfoxide reductase MsrA"/>
    <property type="match status" value="1"/>
</dbReference>
<dbReference type="Gene3D" id="3.30.1060.10">
    <property type="entry name" value="Peptide methionine sulphoxide reductase MsrA"/>
    <property type="match status" value="1"/>
</dbReference>
<dbReference type="HAMAP" id="MF_01401">
    <property type="entry name" value="MsrA"/>
    <property type="match status" value="1"/>
</dbReference>
<dbReference type="InterPro" id="IPR002569">
    <property type="entry name" value="Met_Sox_Rdtase_MsrA_dom"/>
</dbReference>
<dbReference type="InterPro" id="IPR036509">
    <property type="entry name" value="Met_Sox_Rdtase_MsrA_sf"/>
</dbReference>
<dbReference type="NCBIfam" id="TIGR00401">
    <property type="entry name" value="msrA"/>
    <property type="match status" value="1"/>
</dbReference>
<dbReference type="PANTHER" id="PTHR43774">
    <property type="entry name" value="PEPTIDE METHIONINE SULFOXIDE REDUCTASE"/>
    <property type="match status" value="1"/>
</dbReference>
<dbReference type="PANTHER" id="PTHR43774:SF1">
    <property type="entry name" value="PEPTIDE METHIONINE SULFOXIDE REDUCTASE MSRA 2"/>
    <property type="match status" value="1"/>
</dbReference>
<dbReference type="Pfam" id="PF01625">
    <property type="entry name" value="PMSR"/>
    <property type="match status" value="1"/>
</dbReference>
<dbReference type="SUPFAM" id="SSF55068">
    <property type="entry name" value="Peptide methionine sulfoxide reductase"/>
    <property type="match status" value="1"/>
</dbReference>
<comment type="function">
    <text evidence="1">Has an important function as a repair enzyme for proteins that have been inactivated by oxidation. Catalyzes the reversible oxidation-reduction of methionine sulfoxide in proteins to methionine.</text>
</comment>
<comment type="catalytic activity">
    <reaction evidence="1">
        <text>L-methionyl-[protein] + [thioredoxin]-disulfide + H2O = L-methionyl-(S)-S-oxide-[protein] + [thioredoxin]-dithiol</text>
        <dbReference type="Rhea" id="RHEA:14217"/>
        <dbReference type="Rhea" id="RHEA-COMP:10698"/>
        <dbReference type="Rhea" id="RHEA-COMP:10700"/>
        <dbReference type="Rhea" id="RHEA-COMP:12313"/>
        <dbReference type="Rhea" id="RHEA-COMP:12315"/>
        <dbReference type="ChEBI" id="CHEBI:15377"/>
        <dbReference type="ChEBI" id="CHEBI:16044"/>
        <dbReference type="ChEBI" id="CHEBI:29950"/>
        <dbReference type="ChEBI" id="CHEBI:44120"/>
        <dbReference type="ChEBI" id="CHEBI:50058"/>
        <dbReference type="EC" id="1.8.4.11"/>
    </reaction>
</comment>
<comment type="catalytic activity">
    <reaction evidence="1">
        <text>[thioredoxin]-disulfide + L-methionine + H2O = L-methionine (S)-S-oxide + [thioredoxin]-dithiol</text>
        <dbReference type="Rhea" id="RHEA:19993"/>
        <dbReference type="Rhea" id="RHEA-COMP:10698"/>
        <dbReference type="Rhea" id="RHEA-COMP:10700"/>
        <dbReference type="ChEBI" id="CHEBI:15377"/>
        <dbReference type="ChEBI" id="CHEBI:29950"/>
        <dbReference type="ChEBI" id="CHEBI:50058"/>
        <dbReference type="ChEBI" id="CHEBI:57844"/>
        <dbReference type="ChEBI" id="CHEBI:58772"/>
        <dbReference type="EC" id="1.8.4.11"/>
    </reaction>
</comment>
<comment type="similarity">
    <text evidence="1">Belongs to the MsrA Met sulfoxide reductase family.</text>
</comment>
<sequence length="169" mass="19268">MSDHKRAVLAGGCFWGMQDLIRKQPGVVSTRVGYTGGQNDHPTYRNHPGHAEAIEIVYDPAQTDYRALLEFFFQIHDPTTKNRQGNDVGTSYRSEIFYVDDEQRRIALDTIADVDASGLWPGKVVTDVSPAPEFWEAEPEHQDYLERYPSGYTCHFPRPGWKLPKRAEV</sequence>
<evidence type="ECO:0000255" key="1">
    <source>
        <dbReference type="HAMAP-Rule" id="MF_01401"/>
    </source>
</evidence>
<feature type="chain" id="PRO_1000145422" description="Peptide methionine sulfoxide reductase MsrA">
    <location>
        <begin position="1"/>
        <end position="169"/>
    </location>
</feature>
<feature type="active site" evidence="1">
    <location>
        <position position="13"/>
    </location>
</feature>